<accession>P52402</accession>
<proteinExistence type="evidence at transcript level"/>
<evidence type="ECO:0000250" key="1"/>
<evidence type="ECO:0000250" key="2">
    <source>
        <dbReference type="UniProtKB" id="O22317"/>
    </source>
</evidence>
<evidence type="ECO:0000255" key="3"/>
<evidence type="ECO:0000305" key="4"/>
<reference key="1">
    <citation type="journal article" date="1994" name="Plant Mol. Biol.">
        <title>Primary structure and expression of mRNAs encoding basic chitinase and 1,3-beta-glucanase in potato.</title>
        <authorList>
            <person name="Beerhues L."/>
            <person name="Kombrink E."/>
        </authorList>
    </citation>
    <scope>NUCLEOTIDE SEQUENCE [MRNA]</scope>
    <source>
        <strain>cv. Datura</strain>
        <tissue>Leaf</tissue>
    </source>
</reference>
<organism>
    <name type="scientific">Solanum tuberosum</name>
    <name type="common">Potato</name>
    <dbReference type="NCBI Taxonomy" id="4113"/>
    <lineage>
        <taxon>Eukaryota</taxon>
        <taxon>Viridiplantae</taxon>
        <taxon>Streptophyta</taxon>
        <taxon>Embryophyta</taxon>
        <taxon>Tracheophyta</taxon>
        <taxon>Spermatophyta</taxon>
        <taxon>Magnoliopsida</taxon>
        <taxon>eudicotyledons</taxon>
        <taxon>Gunneridae</taxon>
        <taxon>Pentapetalae</taxon>
        <taxon>asterids</taxon>
        <taxon>lamiids</taxon>
        <taxon>Solanales</taxon>
        <taxon>Solanaceae</taxon>
        <taxon>Solanoideae</taxon>
        <taxon>Solaneae</taxon>
        <taxon>Solanum</taxon>
    </lineage>
</organism>
<name>E133_SOLTU</name>
<keyword id="KW-0325">Glycoprotein</keyword>
<keyword id="KW-0326">Glycosidase</keyword>
<keyword id="KW-0378">Hydrolase</keyword>
<keyword id="KW-0611">Plant defense</keyword>
<keyword id="KW-1185">Reference proteome</keyword>
<keyword id="KW-0926">Vacuole</keyword>
<dbReference type="EC" id="3.2.1.39"/>
<dbReference type="EMBL" id="U01902">
    <property type="protein sequence ID" value="AAA19111.1"/>
    <property type="molecule type" value="mRNA"/>
</dbReference>
<dbReference type="PIR" id="S65023">
    <property type="entry name" value="S65023"/>
</dbReference>
<dbReference type="SMR" id="P52402"/>
<dbReference type="FunCoup" id="P52402">
    <property type="interactions" value="38"/>
</dbReference>
<dbReference type="STRING" id="4113.P52402"/>
<dbReference type="Allergome" id="2551">
    <property type="allergen name" value="Sola t Glucanase"/>
</dbReference>
<dbReference type="CAZy" id="GH17">
    <property type="family name" value="Glycoside Hydrolase Family 17"/>
</dbReference>
<dbReference type="GlyCosmos" id="P52402">
    <property type="glycosylation" value="1 site, No reported glycans"/>
</dbReference>
<dbReference type="InParanoid" id="P52402"/>
<dbReference type="Proteomes" id="UP000011115">
    <property type="component" value="Unassembled WGS sequence"/>
</dbReference>
<dbReference type="ExpressionAtlas" id="P52402">
    <property type="expression patterns" value="baseline and differential"/>
</dbReference>
<dbReference type="GO" id="GO:0005773">
    <property type="term" value="C:vacuole"/>
    <property type="evidence" value="ECO:0007669"/>
    <property type="project" value="UniProtKB-SubCell"/>
</dbReference>
<dbReference type="GO" id="GO:0042973">
    <property type="term" value="F:glucan endo-1,3-beta-D-glucosidase activity"/>
    <property type="evidence" value="ECO:0007669"/>
    <property type="project" value="UniProtKB-EC"/>
</dbReference>
<dbReference type="GO" id="GO:0005975">
    <property type="term" value="P:carbohydrate metabolic process"/>
    <property type="evidence" value="ECO:0007669"/>
    <property type="project" value="InterPro"/>
</dbReference>
<dbReference type="GO" id="GO:0006952">
    <property type="term" value="P:defense response"/>
    <property type="evidence" value="ECO:0007669"/>
    <property type="project" value="UniProtKB-KW"/>
</dbReference>
<dbReference type="FunFam" id="3.20.20.80:FF:000010">
    <property type="entry name" value="glucan endo-1,3-beta-glucosidase, basic"/>
    <property type="match status" value="1"/>
</dbReference>
<dbReference type="Gene3D" id="3.20.20.80">
    <property type="entry name" value="Glycosidases"/>
    <property type="match status" value="1"/>
</dbReference>
<dbReference type="InterPro" id="IPR000490">
    <property type="entry name" value="Glyco_hydro_17"/>
</dbReference>
<dbReference type="InterPro" id="IPR044965">
    <property type="entry name" value="Glyco_hydro_17_plant"/>
</dbReference>
<dbReference type="InterPro" id="IPR017853">
    <property type="entry name" value="Glycoside_hydrolase_SF"/>
</dbReference>
<dbReference type="PANTHER" id="PTHR32227">
    <property type="entry name" value="GLUCAN ENDO-1,3-BETA-GLUCOSIDASE BG1-RELATED-RELATED"/>
    <property type="match status" value="1"/>
</dbReference>
<dbReference type="Pfam" id="PF00332">
    <property type="entry name" value="Glyco_hydro_17"/>
    <property type="match status" value="1"/>
</dbReference>
<dbReference type="SUPFAM" id="SSF51445">
    <property type="entry name" value="(Trans)glycosidases"/>
    <property type="match status" value="1"/>
</dbReference>
<dbReference type="PROSITE" id="PS00587">
    <property type="entry name" value="GLYCOSYL_HYDROL_F17"/>
    <property type="match status" value="1"/>
</dbReference>
<protein>
    <recommendedName>
        <fullName>Glucan endo-1,3-beta-glucosidase, basic isoform 3</fullName>
        <ecNumber>3.2.1.39</ecNumber>
    </recommendedName>
    <alternativeName>
        <fullName>(1-&gt;3)-beta-glucan endohydrolase</fullName>
        <shortName>(1-&gt;3)-beta-glucanase</shortName>
    </alternativeName>
    <alternativeName>
        <fullName>Beta-1,3-endoglucanase</fullName>
    </alternativeName>
</protein>
<sequence>NNLPSHSEVIQLYKSRNIGRLRLYDPNHGALNALRGSNIEVILGLPNVDVKHIASGMEHARWWVQKNVKDFWPDVKIKYIAVGNEISPVTGTSSLTSFQVPALVNIYKAIGEAGLGNDIKVSTSVDMTLIGNSYPPSQGSFRNDVRWFTDPIVGFLRDTRAPLLVNIYPYFSYSGNPGQISLPYALFTAPNVVVQDGSRQYRNLFDAMLDSVYAAMERTGGGSVGIVVSESGWPSAGAFGATQDNAATYLRNLIQHAKEGSPRKPGPIETYIFAMFDENNKNPELEKHFGLFSPNKQPKYNLNFGVSERVWDISAETNSTTSSLISEM</sequence>
<feature type="chain" id="PRO_0000011864" description="Glucan endo-1,3-beta-glucosidase, basic isoform 3">
    <location>
        <begin position="1" status="less than"/>
        <end position="305"/>
    </location>
</feature>
<feature type="propeptide" id="PRO_0000011865" description="Removed in mature form" evidence="1">
    <location>
        <begin position="306"/>
        <end position="328"/>
    </location>
</feature>
<feature type="active site" description="Proton donor" evidence="2">
    <location>
        <position position="85"/>
    </location>
</feature>
<feature type="active site" description="Nucleophile" evidence="2">
    <location>
        <position position="230"/>
    </location>
</feature>
<feature type="glycosylation site" description="N-linked (GlcNAc...) asparagine" evidence="3">
    <location>
        <position position="318"/>
    </location>
</feature>
<feature type="non-terminal residue">
    <location>
        <position position="1"/>
    </location>
</feature>
<comment type="function">
    <text>Is thought to be an important plant defense-related product against fungal pathogens.</text>
</comment>
<comment type="catalytic activity">
    <reaction>
        <text>Hydrolysis of (1-&gt;3)-beta-D-glucosidic linkages in (1-&gt;3)-beta-D-glucans.</text>
        <dbReference type="EC" id="3.2.1.39"/>
    </reaction>
</comment>
<comment type="subcellular location">
    <subcellularLocation>
        <location evidence="1">Vacuole</location>
    </subcellularLocation>
</comment>
<comment type="developmental stage">
    <text>Highest levels in old segments of leaves, stems and roots.</text>
</comment>
<comment type="induction">
    <text>In response to infection, elicitor, ethylene, wounding.</text>
</comment>
<comment type="similarity">
    <text evidence="4">Belongs to the glycosyl hydrolase 17 family.</text>
</comment>
<gene>
    <name type="primary">GLUB3</name>
</gene>